<comment type="function">
    <text evidence="1">Necessary for the introduction of cis unsaturation into fatty acids. Catalyzes the dehydration of (3R)-3-hydroxydecanoyl-ACP to E-(2)-decenoyl-ACP and then its isomerization to Z-(3)-decenoyl-ACP. Can catalyze the dehydratase reaction for beta-hydroxyacyl-ACPs with saturated chain lengths up to 16:0, being most active on intermediate chain length.</text>
</comment>
<comment type="catalytic activity">
    <reaction evidence="1">
        <text>a (3R)-hydroxyacyl-[ACP] = a (2E)-enoyl-[ACP] + H2O</text>
        <dbReference type="Rhea" id="RHEA:13097"/>
        <dbReference type="Rhea" id="RHEA-COMP:9925"/>
        <dbReference type="Rhea" id="RHEA-COMP:9945"/>
        <dbReference type="ChEBI" id="CHEBI:15377"/>
        <dbReference type="ChEBI" id="CHEBI:78784"/>
        <dbReference type="ChEBI" id="CHEBI:78827"/>
        <dbReference type="EC" id="4.2.1.59"/>
    </reaction>
</comment>
<comment type="catalytic activity">
    <reaction evidence="1">
        <text>(3R)-hydroxydecanoyl-[ACP] = (2E)-decenoyl-[ACP] + H2O</text>
        <dbReference type="Rhea" id="RHEA:41860"/>
        <dbReference type="Rhea" id="RHEA-COMP:9638"/>
        <dbReference type="Rhea" id="RHEA-COMP:9639"/>
        <dbReference type="ChEBI" id="CHEBI:15377"/>
        <dbReference type="ChEBI" id="CHEBI:78466"/>
        <dbReference type="ChEBI" id="CHEBI:78467"/>
    </reaction>
</comment>
<comment type="catalytic activity">
    <reaction evidence="1">
        <text>(2E)-decenoyl-[ACP] = (3Z)-decenoyl-[ACP]</text>
        <dbReference type="Rhea" id="RHEA:23568"/>
        <dbReference type="Rhea" id="RHEA-COMP:9639"/>
        <dbReference type="Rhea" id="RHEA-COMP:9927"/>
        <dbReference type="ChEBI" id="CHEBI:78467"/>
        <dbReference type="ChEBI" id="CHEBI:78798"/>
        <dbReference type="EC" id="5.3.3.14"/>
    </reaction>
</comment>
<comment type="pathway">
    <text evidence="1">Lipid metabolism; fatty acid biosynthesis.</text>
</comment>
<comment type="subunit">
    <text evidence="1">Homodimer.</text>
</comment>
<comment type="subcellular location">
    <subcellularLocation>
        <location evidence="1">Cytoplasm</location>
    </subcellularLocation>
</comment>
<comment type="similarity">
    <text evidence="1">Belongs to the thioester dehydratase family. FabA subfamily.</text>
</comment>
<feature type="chain" id="PRO_1000080429" description="3-hydroxydecanoyl-[acyl-carrier-protein] dehydratase">
    <location>
        <begin position="1"/>
        <end position="171"/>
    </location>
</feature>
<feature type="active site" evidence="1">
    <location>
        <position position="70"/>
    </location>
</feature>
<name>FABA_PSEPG</name>
<evidence type="ECO:0000255" key="1">
    <source>
        <dbReference type="HAMAP-Rule" id="MF_00405"/>
    </source>
</evidence>
<gene>
    <name evidence="1" type="primary">fabA</name>
    <name type="ordered locus">PputGB1_3745</name>
</gene>
<organism>
    <name type="scientific">Pseudomonas putida (strain GB-1)</name>
    <dbReference type="NCBI Taxonomy" id="76869"/>
    <lineage>
        <taxon>Bacteria</taxon>
        <taxon>Pseudomonadati</taxon>
        <taxon>Pseudomonadota</taxon>
        <taxon>Gammaproteobacteria</taxon>
        <taxon>Pseudomonadales</taxon>
        <taxon>Pseudomonadaceae</taxon>
        <taxon>Pseudomonas</taxon>
    </lineage>
</organism>
<reference key="1">
    <citation type="submission" date="2008-01" db="EMBL/GenBank/DDBJ databases">
        <title>Complete sequence of Pseudomonas putida GB-1.</title>
        <authorList>
            <consortium name="US DOE Joint Genome Institute"/>
            <person name="Copeland A."/>
            <person name="Lucas S."/>
            <person name="Lapidus A."/>
            <person name="Barry K."/>
            <person name="Glavina del Rio T."/>
            <person name="Dalin E."/>
            <person name="Tice H."/>
            <person name="Pitluck S."/>
            <person name="Bruce D."/>
            <person name="Goodwin L."/>
            <person name="Chertkov O."/>
            <person name="Brettin T."/>
            <person name="Detter J.C."/>
            <person name="Han C."/>
            <person name="Kuske C.R."/>
            <person name="Schmutz J."/>
            <person name="Larimer F."/>
            <person name="Land M."/>
            <person name="Hauser L."/>
            <person name="Kyrpides N."/>
            <person name="Kim E."/>
            <person name="McCarthy J.K."/>
            <person name="Richardson P."/>
        </authorList>
    </citation>
    <scope>NUCLEOTIDE SEQUENCE [LARGE SCALE GENOMIC DNA]</scope>
    <source>
        <strain>GB-1</strain>
    </source>
</reference>
<proteinExistence type="inferred from homology"/>
<protein>
    <recommendedName>
        <fullName evidence="1">3-hydroxydecanoyl-[acyl-carrier-protein] dehydratase</fullName>
        <ecNumber evidence="1">4.2.1.59</ecNumber>
    </recommendedName>
    <alternativeName>
        <fullName evidence="1">3-hydroxyacyl-[acyl-carrier-protein] dehydratase FabA</fullName>
    </alternativeName>
    <alternativeName>
        <fullName evidence="1">Beta-hydroxydecanoyl thioester dehydrase</fullName>
    </alternativeName>
    <alternativeName>
        <fullName evidence="1">Trans-2-decenoyl-[acyl-carrier-protein] isomerase</fullName>
        <ecNumber evidence="1">5.3.3.14</ecNumber>
    </alternativeName>
</protein>
<dbReference type="EC" id="4.2.1.59" evidence="1"/>
<dbReference type="EC" id="5.3.3.14" evidence="1"/>
<dbReference type="EMBL" id="CP000926">
    <property type="protein sequence ID" value="ABY99635.1"/>
    <property type="molecule type" value="Genomic_DNA"/>
</dbReference>
<dbReference type="RefSeq" id="WP_012273340.1">
    <property type="nucleotide sequence ID" value="NC_010322.1"/>
</dbReference>
<dbReference type="SMR" id="B0KNV6"/>
<dbReference type="GeneID" id="49616576"/>
<dbReference type="KEGG" id="ppg:PputGB1_3745"/>
<dbReference type="eggNOG" id="COG0764">
    <property type="taxonomic scope" value="Bacteria"/>
</dbReference>
<dbReference type="HOGENOM" id="CLU_097925_0_0_6"/>
<dbReference type="UniPathway" id="UPA00094"/>
<dbReference type="Proteomes" id="UP000002157">
    <property type="component" value="Chromosome"/>
</dbReference>
<dbReference type="GO" id="GO:0005737">
    <property type="term" value="C:cytoplasm"/>
    <property type="evidence" value="ECO:0007669"/>
    <property type="project" value="UniProtKB-SubCell"/>
</dbReference>
<dbReference type="GO" id="GO:0019171">
    <property type="term" value="F:(3R)-hydroxyacyl-[acyl-carrier-protein] dehydratase activity"/>
    <property type="evidence" value="ECO:0007669"/>
    <property type="project" value="UniProtKB-UniRule"/>
</dbReference>
<dbReference type="GO" id="GO:0034017">
    <property type="term" value="F:trans-2-decenoyl-acyl-carrier-protein isomerase activity"/>
    <property type="evidence" value="ECO:0007669"/>
    <property type="project" value="UniProtKB-UniRule"/>
</dbReference>
<dbReference type="GO" id="GO:0006636">
    <property type="term" value="P:unsaturated fatty acid biosynthetic process"/>
    <property type="evidence" value="ECO:0007669"/>
    <property type="project" value="UniProtKB-UniRule"/>
</dbReference>
<dbReference type="CDD" id="cd01287">
    <property type="entry name" value="FabA"/>
    <property type="match status" value="1"/>
</dbReference>
<dbReference type="Gene3D" id="3.10.129.10">
    <property type="entry name" value="Hotdog Thioesterase"/>
    <property type="match status" value="1"/>
</dbReference>
<dbReference type="HAMAP" id="MF_00405">
    <property type="entry name" value="FabA"/>
    <property type="match status" value="1"/>
</dbReference>
<dbReference type="InterPro" id="IPR010083">
    <property type="entry name" value="FabA"/>
</dbReference>
<dbReference type="InterPro" id="IPR013114">
    <property type="entry name" value="FabA_FabZ"/>
</dbReference>
<dbReference type="InterPro" id="IPR029069">
    <property type="entry name" value="HotDog_dom_sf"/>
</dbReference>
<dbReference type="NCBIfam" id="TIGR01749">
    <property type="entry name" value="fabA"/>
    <property type="match status" value="1"/>
</dbReference>
<dbReference type="NCBIfam" id="NF003509">
    <property type="entry name" value="PRK05174.1"/>
    <property type="match status" value="1"/>
</dbReference>
<dbReference type="PANTHER" id="PTHR30272">
    <property type="entry name" value="3-HYDROXYACYL-[ACYL-CARRIER-PROTEIN] DEHYDRATASE"/>
    <property type="match status" value="1"/>
</dbReference>
<dbReference type="PANTHER" id="PTHR30272:SF8">
    <property type="entry name" value="3-HYDROXYDECANOYL-[ACYL-CARRIER-PROTEIN] DEHYDRATASE"/>
    <property type="match status" value="1"/>
</dbReference>
<dbReference type="Pfam" id="PF07977">
    <property type="entry name" value="FabA"/>
    <property type="match status" value="1"/>
</dbReference>
<dbReference type="SUPFAM" id="SSF54637">
    <property type="entry name" value="Thioesterase/thiol ester dehydrase-isomerase"/>
    <property type="match status" value="1"/>
</dbReference>
<sequence>MTKQHAFTREDLLRCSRGELFGPGNAQLPAPNMLMVDRITHISEEGGKYGKGELVAELDITPDLWFFACHFEGDPVMPGCLGLDAMWQLVGFFLGWQGLPGRGRALGSGEVKFFGQVLPSAKKVTYNIHIKRVLKGKLNMAIADGSVSVDGREIYTAEGLRVGVFTSTDNF</sequence>
<keyword id="KW-0963">Cytoplasm</keyword>
<keyword id="KW-0275">Fatty acid biosynthesis</keyword>
<keyword id="KW-0276">Fatty acid metabolism</keyword>
<keyword id="KW-0413">Isomerase</keyword>
<keyword id="KW-0444">Lipid biosynthesis</keyword>
<keyword id="KW-0443">Lipid metabolism</keyword>
<keyword id="KW-0456">Lyase</keyword>
<accession>B0KNV6</accession>